<feature type="chain" id="PRO_1000063469" description="Histidinol-phosphate aminotransferase">
    <location>
        <begin position="1"/>
        <end position="360"/>
    </location>
</feature>
<feature type="modified residue" description="N6-(pyridoxal phosphate)lysine" evidence="1">
    <location>
        <position position="218"/>
    </location>
</feature>
<name>HIS8_CHLPD</name>
<organism>
    <name type="scientific">Chlorobium phaeobacteroides (strain DSM 266 / SMG 266 / 2430)</name>
    <dbReference type="NCBI Taxonomy" id="290317"/>
    <lineage>
        <taxon>Bacteria</taxon>
        <taxon>Pseudomonadati</taxon>
        <taxon>Chlorobiota</taxon>
        <taxon>Chlorobiia</taxon>
        <taxon>Chlorobiales</taxon>
        <taxon>Chlorobiaceae</taxon>
        <taxon>Chlorobium/Pelodictyon group</taxon>
        <taxon>Chlorobium</taxon>
    </lineage>
</organism>
<sequence>MKRDIQELLNPALRDLKAYNVEGGQQAGIKLNQNESPFDLPLWLKEEVLEAFEKEPWNRYPDILPFRGMRSYASFVGVPADAVMMSNGSNEMLYTIFLACLGPGKKILIPEPSFSLYEKIARLLHTEVVFVPMLPGLAFDADAIIRKAGEERVDFIVLSTPNNPTGMSLASEEVCRIAEAADALVLVDEAYIEFSRQKSVVAEIARLKNLIVLRTMSKALALAGMRIGFAIADPALMAEIAKPKIPFASSRLSEITLQRVLANYYLVTDAVSYILHERERLSTELKGIGGVELYESDTNFIIIRVRHAHELFCELSRRDILVRDVSGYPLMENCLRFNIGLRDENDALLQQLRLLCDEPV</sequence>
<accession>A1BGB4</accession>
<gene>
    <name evidence="1" type="primary">hisC</name>
    <name type="ordered locus">Cpha266_1412</name>
</gene>
<protein>
    <recommendedName>
        <fullName evidence="1">Histidinol-phosphate aminotransferase</fullName>
        <ecNumber evidence="1">2.6.1.9</ecNumber>
    </recommendedName>
    <alternativeName>
        <fullName evidence="1">Imidazole acetol-phosphate transaminase</fullName>
    </alternativeName>
</protein>
<comment type="catalytic activity">
    <reaction evidence="1">
        <text>L-histidinol phosphate + 2-oxoglutarate = 3-(imidazol-4-yl)-2-oxopropyl phosphate + L-glutamate</text>
        <dbReference type="Rhea" id="RHEA:23744"/>
        <dbReference type="ChEBI" id="CHEBI:16810"/>
        <dbReference type="ChEBI" id="CHEBI:29985"/>
        <dbReference type="ChEBI" id="CHEBI:57766"/>
        <dbReference type="ChEBI" id="CHEBI:57980"/>
        <dbReference type="EC" id="2.6.1.9"/>
    </reaction>
</comment>
<comment type="cofactor">
    <cofactor evidence="1">
        <name>pyridoxal 5'-phosphate</name>
        <dbReference type="ChEBI" id="CHEBI:597326"/>
    </cofactor>
</comment>
<comment type="pathway">
    <text evidence="1">Amino-acid biosynthesis; L-histidine biosynthesis; L-histidine from 5-phospho-alpha-D-ribose 1-diphosphate: step 7/9.</text>
</comment>
<comment type="subunit">
    <text evidence="1">Homodimer.</text>
</comment>
<comment type="similarity">
    <text evidence="1">Belongs to the class-II pyridoxal-phosphate-dependent aminotransferase family. Histidinol-phosphate aminotransferase subfamily.</text>
</comment>
<evidence type="ECO:0000255" key="1">
    <source>
        <dbReference type="HAMAP-Rule" id="MF_01023"/>
    </source>
</evidence>
<reference key="1">
    <citation type="submission" date="2006-12" db="EMBL/GenBank/DDBJ databases">
        <title>Complete sequence of Chlorobium phaeobacteroides DSM 266.</title>
        <authorList>
            <consortium name="US DOE Joint Genome Institute"/>
            <person name="Copeland A."/>
            <person name="Lucas S."/>
            <person name="Lapidus A."/>
            <person name="Barry K."/>
            <person name="Detter J.C."/>
            <person name="Glavina del Rio T."/>
            <person name="Hammon N."/>
            <person name="Israni S."/>
            <person name="Pitluck S."/>
            <person name="Goltsman E."/>
            <person name="Schmutz J."/>
            <person name="Larimer F."/>
            <person name="Land M."/>
            <person name="Hauser L."/>
            <person name="Mikhailova N."/>
            <person name="Li T."/>
            <person name="Overmann J."/>
            <person name="Bryant D.A."/>
            <person name="Richardson P."/>
        </authorList>
    </citation>
    <scope>NUCLEOTIDE SEQUENCE [LARGE SCALE GENOMIC DNA]</scope>
    <source>
        <strain>DSM 266 / SMG 266 / 2430</strain>
    </source>
</reference>
<proteinExistence type="inferred from homology"/>
<keyword id="KW-0028">Amino-acid biosynthesis</keyword>
<keyword id="KW-0032">Aminotransferase</keyword>
<keyword id="KW-0368">Histidine biosynthesis</keyword>
<keyword id="KW-0663">Pyridoxal phosphate</keyword>
<keyword id="KW-1185">Reference proteome</keyword>
<keyword id="KW-0808">Transferase</keyword>
<dbReference type="EC" id="2.6.1.9" evidence="1"/>
<dbReference type="EMBL" id="CP000492">
    <property type="protein sequence ID" value="ABL65441.1"/>
    <property type="molecule type" value="Genomic_DNA"/>
</dbReference>
<dbReference type="RefSeq" id="WP_011745257.1">
    <property type="nucleotide sequence ID" value="NC_008639.1"/>
</dbReference>
<dbReference type="SMR" id="A1BGB4"/>
<dbReference type="STRING" id="290317.Cpha266_1412"/>
<dbReference type="KEGG" id="cph:Cpha266_1412"/>
<dbReference type="eggNOG" id="COG0079">
    <property type="taxonomic scope" value="Bacteria"/>
</dbReference>
<dbReference type="HOGENOM" id="CLU_017584_3_1_10"/>
<dbReference type="OrthoDB" id="9813612at2"/>
<dbReference type="UniPathway" id="UPA00031">
    <property type="reaction ID" value="UER00012"/>
</dbReference>
<dbReference type="Proteomes" id="UP000008701">
    <property type="component" value="Chromosome"/>
</dbReference>
<dbReference type="GO" id="GO:0004400">
    <property type="term" value="F:histidinol-phosphate transaminase activity"/>
    <property type="evidence" value="ECO:0007669"/>
    <property type="project" value="UniProtKB-UniRule"/>
</dbReference>
<dbReference type="GO" id="GO:0030170">
    <property type="term" value="F:pyridoxal phosphate binding"/>
    <property type="evidence" value="ECO:0007669"/>
    <property type="project" value="InterPro"/>
</dbReference>
<dbReference type="GO" id="GO:0000105">
    <property type="term" value="P:L-histidine biosynthetic process"/>
    <property type="evidence" value="ECO:0007669"/>
    <property type="project" value="UniProtKB-UniRule"/>
</dbReference>
<dbReference type="CDD" id="cd00609">
    <property type="entry name" value="AAT_like"/>
    <property type="match status" value="1"/>
</dbReference>
<dbReference type="Gene3D" id="3.90.1150.10">
    <property type="entry name" value="Aspartate Aminotransferase, domain 1"/>
    <property type="match status" value="1"/>
</dbReference>
<dbReference type="Gene3D" id="3.40.640.10">
    <property type="entry name" value="Type I PLP-dependent aspartate aminotransferase-like (Major domain)"/>
    <property type="match status" value="1"/>
</dbReference>
<dbReference type="HAMAP" id="MF_01023">
    <property type="entry name" value="HisC_aminotrans_2"/>
    <property type="match status" value="1"/>
</dbReference>
<dbReference type="InterPro" id="IPR001917">
    <property type="entry name" value="Aminotrans_II_pyridoxalP_BS"/>
</dbReference>
<dbReference type="InterPro" id="IPR004839">
    <property type="entry name" value="Aminotransferase_I/II_large"/>
</dbReference>
<dbReference type="InterPro" id="IPR005861">
    <property type="entry name" value="HisP_aminotrans"/>
</dbReference>
<dbReference type="InterPro" id="IPR015424">
    <property type="entry name" value="PyrdxlP-dep_Trfase"/>
</dbReference>
<dbReference type="InterPro" id="IPR015421">
    <property type="entry name" value="PyrdxlP-dep_Trfase_major"/>
</dbReference>
<dbReference type="InterPro" id="IPR015422">
    <property type="entry name" value="PyrdxlP-dep_Trfase_small"/>
</dbReference>
<dbReference type="NCBIfam" id="TIGR01141">
    <property type="entry name" value="hisC"/>
    <property type="match status" value="1"/>
</dbReference>
<dbReference type="PANTHER" id="PTHR42885:SF2">
    <property type="entry name" value="HISTIDINOL-PHOSPHATE AMINOTRANSFERASE"/>
    <property type="match status" value="1"/>
</dbReference>
<dbReference type="PANTHER" id="PTHR42885">
    <property type="entry name" value="HISTIDINOL-PHOSPHATE AMINOTRANSFERASE-RELATED"/>
    <property type="match status" value="1"/>
</dbReference>
<dbReference type="Pfam" id="PF00155">
    <property type="entry name" value="Aminotran_1_2"/>
    <property type="match status" value="1"/>
</dbReference>
<dbReference type="SUPFAM" id="SSF53383">
    <property type="entry name" value="PLP-dependent transferases"/>
    <property type="match status" value="1"/>
</dbReference>
<dbReference type="PROSITE" id="PS00599">
    <property type="entry name" value="AA_TRANSFER_CLASS_2"/>
    <property type="match status" value="1"/>
</dbReference>